<dbReference type="EMBL" id="CP000764">
    <property type="protein sequence ID" value="ABS24209.1"/>
    <property type="molecule type" value="Genomic_DNA"/>
</dbReference>
<dbReference type="RefSeq" id="WP_000831901.1">
    <property type="nucleotide sequence ID" value="NC_009674.1"/>
</dbReference>
<dbReference type="SMR" id="A7GVQ1"/>
<dbReference type="STRING" id="315749.Bcer98_4028"/>
<dbReference type="GeneID" id="93005634"/>
<dbReference type="KEGG" id="bcy:Bcer98_4028"/>
<dbReference type="eggNOG" id="COG0230">
    <property type="taxonomic scope" value="Bacteria"/>
</dbReference>
<dbReference type="HOGENOM" id="CLU_129938_2_0_9"/>
<dbReference type="OrthoDB" id="9804164at2"/>
<dbReference type="Proteomes" id="UP000002300">
    <property type="component" value="Chromosome"/>
</dbReference>
<dbReference type="GO" id="GO:1990904">
    <property type="term" value="C:ribonucleoprotein complex"/>
    <property type="evidence" value="ECO:0007669"/>
    <property type="project" value="UniProtKB-KW"/>
</dbReference>
<dbReference type="GO" id="GO:0005840">
    <property type="term" value="C:ribosome"/>
    <property type="evidence" value="ECO:0007669"/>
    <property type="project" value="UniProtKB-KW"/>
</dbReference>
<dbReference type="GO" id="GO:0003735">
    <property type="term" value="F:structural constituent of ribosome"/>
    <property type="evidence" value="ECO:0007669"/>
    <property type="project" value="InterPro"/>
</dbReference>
<dbReference type="GO" id="GO:0006412">
    <property type="term" value="P:translation"/>
    <property type="evidence" value="ECO:0007669"/>
    <property type="project" value="UniProtKB-UniRule"/>
</dbReference>
<dbReference type="FunFam" id="1.10.287.3980:FF:000001">
    <property type="entry name" value="Mitochondrial ribosomal protein L34"/>
    <property type="match status" value="1"/>
</dbReference>
<dbReference type="Gene3D" id="1.10.287.3980">
    <property type="match status" value="1"/>
</dbReference>
<dbReference type="HAMAP" id="MF_00391">
    <property type="entry name" value="Ribosomal_bL34"/>
    <property type="match status" value="1"/>
</dbReference>
<dbReference type="InterPro" id="IPR000271">
    <property type="entry name" value="Ribosomal_bL34"/>
</dbReference>
<dbReference type="InterPro" id="IPR020939">
    <property type="entry name" value="Ribosomal_bL34_CS"/>
</dbReference>
<dbReference type="NCBIfam" id="TIGR01030">
    <property type="entry name" value="rpmH_bact"/>
    <property type="match status" value="1"/>
</dbReference>
<dbReference type="PANTHER" id="PTHR14503:SF4">
    <property type="entry name" value="LARGE RIBOSOMAL SUBUNIT PROTEIN BL34M"/>
    <property type="match status" value="1"/>
</dbReference>
<dbReference type="PANTHER" id="PTHR14503">
    <property type="entry name" value="MITOCHONDRIAL RIBOSOMAL PROTEIN 34 FAMILY MEMBER"/>
    <property type="match status" value="1"/>
</dbReference>
<dbReference type="Pfam" id="PF00468">
    <property type="entry name" value="Ribosomal_L34"/>
    <property type="match status" value="1"/>
</dbReference>
<dbReference type="PROSITE" id="PS00784">
    <property type="entry name" value="RIBOSOMAL_L34"/>
    <property type="match status" value="1"/>
</dbReference>
<protein>
    <recommendedName>
        <fullName evidence="1">Large ribosomal subunit protein bL34</fullName>
    </recommendedName>
    <alternativeName>
        <fullName evidence="3">50S ribosomal protein L34</fullName>
    </alternativeName>
</protein>
<keyword id="KW-0687">Ribonucleoprotein</keyword>
<keyword id="KW-0689">Ribosomal protein</keyword>
<comment type="similarity">
    <text evidence="1">Belongs to the bacterial ribosomal protein bL34 family.</text>
</comment>
<reference key="1">
    <citation type="journal article" date="2008" name="Chem. Biol. Interact.">
        <title>Extending the Bacillus cereus group genomics to putative food-borne pathogens of different toxicity.</title>
        <authorList>
            <person name="Lapidus A."/>
            <person name="Goltsman E."/>
            <person name="Auger S."/>
            <person name="Galleron N."/>
            <person name="Segurens B."/>
            <person name="Dossat C."/>
            <person name="Land M.L."/>
            <person name="Broussolle V."/>
            <person name="Brillard J."/>
            <person name="Guinebretiere M.-H."/>
            <person name="Sanchis V."/>
            <person name="Nguen-the C."/>
            <person name="Lereclus D."/>
            <person name="Richardson P."/>
            <person name="Wincker P."/>
            <person name="Weissenbach J."/>
            <person name="Ehrlich S.D."/>
            <person name="Sorokin A."/>
        </authorList>
    </citation>
    <scope>NUCLEOTIDE SEQUENCE [LARGE SCALE GENOMIC DNA]</scope>
    <source>
        <strain>DSM 22905 / CIP 110041 / 391-98 / NVH 391-98</strain>
    </source>
</reference>
<feature type="chain" id="PRO_1000080238" description="Large ribosomal subunit protein bL34">
    <location>
        <begin position="1"/>
        <end position="44"/>
    </location>
</feature>
<feature type="region of interest" description="Disordered" evidence="2">
    <location>
        <begin position="1"/>
        <end position="44"/>
    </location>
</feature>
<feature type="compositionally biased region" description="Basic residues" evidence="2">
    <location>
        <begin position="1"/>
        <end position="19"/>
    </location>
</feature>
<feature type="compositionally biased region" description="Basic residues" evidence="2">
    <location>
        <begin position="31"/>
        <end position="44"/>
    </location>
</feature>
<name>RL34_BACCN</name>
<accession>A7GVQ1</accession>
<proteinExistence type="inferred from homology"/>
<gene>
    <name evidence="1" type="primary">rpmH</name>
    <name type="ordered locus">Bcer98_4028</name>
</gene>
<evidence type="ECO:0000255" key="1">
    <source>
        <dbReference type="HAMAP-Rule" id="MF_00391"/>
    </source>
</evidence>
<evidence type="ECO:0000256" key="2">
    <source>
        <dbReference type="SAM" id="MobiDB-lite"/>
    </source>
</evidence>
<evidence type="ECO:0000305" key="3"/>
<organism>
    <name type="scientific">Bacillus cytotoxicus (strain DSM 22905 / CIP 110041 / 391-98 / NVH 391-98)</name>
    <dbReference type="NCBI Taxonomy" id="315749"/>
    <lineage>
        <taxon>Bacteria</taxon>
        <taxon>Bacillati</taxon>
        <taxon>Bacillota</taxon>
        <taxon>Bacilli</taxon>
        <taxon>Bacillales</taxon>
        <taxon>Bacillaceae</taxon>
        <taxon>Bacillus</taxon>
        <taxon>Bacillus cereus group</taxon>
    </lineage>
</organism>
<sequence length="44" mass="5170">MKRTYQPNKRKRSKVHGFRSRMSTANGRKVLAARRRKGRKVLSA</sequence>